<protein>
    <recommendedName>
        <fullName evidence="1">Large ribosomal subunit protein uL3</fullName>
    </recommendedName>
    <alternativeName>
        <fullName evidence="3">50S ribosomal protein L3</fullName>
    </alternativeName>
</protein>
<keyword id="KW-1185">Reference proteome</keyword>
<keyword id="KW-0687">Ribonucleoprotein</keyword>
<keyword id="KW-0689">Ribosomal protein</keyword>
<keyword id="KW-0694">RNA-binding</keyword>
<keyword id="KW-0699">rRNA-binding</keyword>
<comment type="function">
    <text evidence="1">One of the primary rRNA binding proteins, it binds directly near the 3'-end of the 23S rRNA, where it nucleates assembly of the 50S subunit.</text>
</comment>
<comment type="subunit">
    <text evidence="1">Part of the 50S ribosomal subunit. Forms a cluster with proteins L14 and L24e.</text>
</comment>
<comment type="similarity">
    <text evidence="1">Belongs to the universal ribosomal protein uL3 family.</text>
</comment>
<organism>
    <name type="scientific">Methanosphaera stadtmanae (strain ATCC 43021 / DSM 3091 / JCM 11832 / MCB-3)</name>
    <dbReference type="NCBI Taxonomy" id="339860"/>
    <lineage>
        <taxon>Archaea</taxon>
        <taxon>Methanobacteriati</taxon>
        <taxon>Methanobacteriota</taxon>
        <taxon>Methanomada group</taxon>
        <taxon>Methanobacteria</taxon>
        <taxon>Methanobacteriales</taxon>
        <taxon>Methanobacteriaceae</taxon>
        <taxon>Methanosphaera</taxon>
    </lineage>
</organism>
<evidence type="ECO:0000255" key="1">
    <source>
        <dbReference type="HAMAP-Rule" id="MF_01325"/>
    </source>
</evidence>
<evidence type="ECO:0000256" key="2">
    <source>
        <dbReference type="SAM" id="MobiDB-lite"/>
    </source>
</evidence>
<evidence type="ECO:0000305" key="3"/>
<sequence>MTRHHQPRKGSVAFSPRKRVARETPRVSTWPELDEAGLLAFAGYKVGMTHVTALDSRKGSPTENMELSVPVTILEAPPLVVLGIRAYTKTTYGLKTLTDVIANDNLDDELSRKISVPKFDDIEAKIEELRNKIDDIDEIRVLIHTKPKLTSVPKKKPEVLEFGLGGKSVEDKLEYAISILGKEITPQDVFQEGEYTDAIATTKGKGVQGPVKRFGVRIQYGKAARSGIERHVGSIGPWTPNRTMWTVAMQGQMGYHKRTEYNKKLLKIGDESEVDLINPDGGFVKYGFVKNNYILVKGSLPGPSKRLVVLRKGVRNASKQVTAPEISYISTTSKQGV</sequence>
<reference key="1">
    <citation type="journal article" date="2006" name="J. Bacteriol.">
        <title>The genome sequence of Methanosphaera stadtmanae reveals why this human intestinal archaeon is restricted to methanol and H2 for methane formation and ATP synthesis.</title>
        <authorList>
            <person name="Fricke W.F."/>
            <person name="Seedorf H."/>
            <person name="Henne A."/>
            <person name="Kruer M."/>
            <person name="Liesegang H."/>
            <person name="Hedderich R."/>
            <person name="Gottschalk G."/>
            <person name="Thauer R.K."/>
        </authorList>
    </citation>
    <scope>NUCLEOTIDE SEQUENCE [LARGE SCALE GENOMIC DNA]</scope>
    <source>
        <strain>ATCC 43021 / DSM 3091 / JCM 11832 / MCB-3</strain>
    </source>
</reference>
<dbReference type="EMBL" id="CP000102">
    <property type="protein sequence ID" value="ABC57297.1"/>
    <property type="molecule type" value="Genomic_DNA"/>
</dbReference>
<dbReference type="SMR" id="Q2NFV6"/>
<dbReference type="STRING" id="339860.Msp_0909"/>
<dbReference type="KEGG" id="mst:Msp_0909"/>
<dbReference type="eggNOG" id="arCOG04070">
    <property type="taxonomic scope" value="Archaea"/>
</dbReference>
<dbReference type="HOGENOM" id="CLU_033361_2_0_2"/>
<dbReference type="OrthoDB" id="6121at2157"/>
<dbReference type="Proteomes" id="UP000001931">
    <property type="component" value="Chromosome"/>
</dbReference>
<dbReference type="GO" id="GO:0022625">
    <property type="term" value="C:cytosolic large ribosomal subunit"/>
    <property type="evidence" value="ECO:0007669"/>
    <property type="project" value="TreeGrafter"/>
</dbReference>
<dbReference type="GO" id="GO:0019843">
    <property type="term" value="F:rRNA binding"/>
    <property type="evidence" value="ECO:0007669"/>
    <property type="project" value="UniProtKB-UniRule"/>
</dbReference>
<dbReference type="GO" id="GO:0003735">
    <property type="term" value="F:structural constituent of ribosome"/>
    <property type="evidence" value="ECO:0007669"/>
    <property type="project" value="InterPro"/>
</dbReference>
<dbReference type="GO" id="GO:0006412">
    <property type="term" value="P:translation"/>
    <property type="evidence" value="ECO:0007669"/>
    <property type="project" value="UniProtKB-UniRule"/>
</dbReference>
<dbReference type="Gene3D" id="3.30.1430.10">
    <property type="match status" value="1"/>
</dbReference>
<dbReference type="Gene3D" id="4.10.960.10">
    <property type="entry name" value="Ribosomal protein L3, domain 3"/>
    <property type="match status" value="1"/>
</dbReference>
<dbReference type="Gene3D" id="2.40.30.10">
    <property type="entry name" value="Translation factors"/>
    <property type="match status" value="1"/>
</dbReference>
<dbReference type="HAMAP" id="MF_01325_A">
    <property type="entry name" value="Ribosomal_uL3_A"/>
    <property type="match status" value="1"/>
</dbReference>
<dbReference type="InterPro" id="IPR045077">
    <property type="entry name" value="L3_arc_euk"/>
</dbReference>
<dbReference type="InterPro" id="IPR044892">
    <property type="entry name" value="Ribosomal_L3_dom_3_arc_sf"/>
</dbReference>
<dbReference type="InterPro" id="IPR000597">
    <property type="entry name" value="Ribosomal_uL3"/>
</dbReference>
<dbReference type="InterPro" id="IPR019928">
    <property type="entry name" value="Ribosomal_uL3_arc"/>
</dbReference>
<dbReference type="InterPro" id="IPR019926">
    <property type="entry name" value="Ribosomal_uL3_CS"/>
</dbReference>
<dbReference type="InterPro" id="IPR009000">
    <property type="entry name" value="Transl_B-barrel_sf"/>
</dbReference>
<dbReference type="NCBIfam" id="TIGR03626">
    <property type="entry name" value="L3_arch"/>
    <property type="match status" value="1"/>
</dbReference>
<dbReference type="NCBIfam" id="NF003261">
    <property type="entry name" value="PRK04231.1"/>
    <property type="match status" value="1"/>
</dbReference>
<dbReference type="PANTHER" id="PTHR11363">
    <property type="entry name" value="60S RIBOSOMAL PROTEIN L3-RELATED"/>
    <property type="match status" value="1"/>
</dbReference>
<dbReference type="PANTHER" id="PTHR11363:SF5">
    <property type="entry name" value="LARGE RIBOSOMAL SUBUNIT PROTEIN UL3"/>
    <property type="match status" value="1"/>
</dbReference>
<dbReference type="Pfam" id="PF00297">
    <property type="entry name" value="Ribosomal_L3"/>
    <property type="match status" value="1"/>
</dbReference>
<dbReference type="SUPFAM" id="SSF50447">
    <property type="entry name" value="Translation proteins"/>
    <property type="match status" value="1"/>
</dbReference>
<dbReference type="PROSITE" id="PS00474">
    <property type="entry name" value="RIBOSOMAL_L3"/>
    <property type="match status" value="1"/>
</dbReference>
<accession>Q2NFV6</accession>
<proteinExistence type="inferred from homology"/>
<gene>
    <name evidence="1" type="primary">rpl3</name>
    <name type="ordered locus">Msp_0909</name>
</gene>
<feature type="chain" id="PRO_0000241441" description="Large ribosomal subunit protein uL3">
    <location>
        <begin position="1"/>
        <end position="337"/>
    </location>
</feature>
<feature type="region of interest" description="Disordered" evidence="2">
    <location>
        <begin position="1"/>
        <end position="26"/>
    </location>
</feature>
<name>RL3_METST</name>